<proteinExistence type="inferred from homology"/>
<accession>Q4T8S6</accession>
<comment type="function">
    <text evidence="1 3">Component of the small ribosomal subunit. The ribosome is a large ribonucleoprotein complex responsible for the synthesis of proteins in the cell. Part of the small subunit (SSU) processome, first precursor of the small eukaryotic ribosomal subunit. During the assembly of the SSU processome in the nucleolus, many ribosome biogenesis factors, an RNA chaperone and ribosomal proteins associate with the nascent pre-rRNA and work in concert to generate RNA folding, modifications, rearrangements and cleavage as well as targeted degradation of pre-ribosomal RNA by the RNA exosome (By similarity). May play a role during erythropoiesis (By similarity).</text>
</comment>
<comment type="subunit">
    <text evidence="1">Component of the small ribosomal subunit. Mature ribosomes consist of a small (40S) and a large (60S) subunit. The 40S subunit contains about 33 different proteins and 1 molecule of RNA (18S). The 60S subunit contains about 49 different proteins and 3 molecules of RNA (28S, 5.8S and 5S). Part of the small subunit (SSU) processome, composed of more than 70 proteins and the RNA chaperone small nucleolar RNA (snoRNA) U3.</text>
</comment>
<comment type="subcellular location">
    <subcellularLocation>
        <location evidence="2 3">Cytoplasm</location>
    </subcellularLocation>
    <subcellularLocation>
        <location evidence="2 3">Nucleus</location>
    </subcellularLocation>
    <subcellularLocation>
        <location evidence="1">Nucleus</location>
        <location evidence="1">Nucleolus</location>
    </subcellularLocation>
</comment>
<comment type="similarity">
    <text evidence="3">Belongs to the eukaryotic ribosomal protein eS1 family.</text>
</comment>
<reference key="1">
    <citation type="journal article" date="2004" name="Nature">
        <title>Genome duplication in the teleost fish Tetraodon nigroviridis reveals the early vertebrate proto-karyotype.</title>
        <authorList>
            <person name="Jaillon O."/>
            <person name="Aury J.-M."/>
            <person name="Brunet F."/>
            <person name="Petit J.-L."/>
            <person name="Stange-Thomann N."/>
            <person name="Mauceli E."/>
            <person name="Bouneau L."/>
            <person name="Fischer C."/>
            <person name="Ozouf-Costaz C."/>
            <person name="Bernot A."/>
            <person name="Nicaud S."/>
            <person name="Jaffe D."/>
            <person name="Fisher S."/>
            <person name="Lutfalla G."/>
            <person name="Dossat C."/>
            <person name="Segurens B."/>
            <person name="Dasilva C."/>
            <person name="Salanoubat M."/>
            <person name="Levy M."/>
            <person name="Boudet N."/>
            <person name="Castellano S."/>
            <person name="Anthouard V."/>
            <person name="Jubin C."/>
            <person name="Castelli V."/>
            <person name="Katinka M."/>
            <person name="Vacherie B."/>
            <person name="Biemont C."/>
            <person name="Skalli Z."/>
            <person name="Cattolico L."/>
            <person name="Poulain J."/>
            <person name="De Berardinis V."/>
            <person name="Cruaud C."/>
            <person name="Duprat S."/>
            <person name="Brottier P."/>
            <person name="Coutanceau J.-P."/>
            <person name="Gouzy J."/>
            <person name="Parra G."/>
            <person name="Lardier G."/>
            <person name="Chapple C."/>
            <person name="McKernan K.J."/>
            <person name="McEwan P."/>
            <person name="Bosak S."/>
            <person name="Kellis M."/>
            <person name="Volff J.-N."/>
            <person name="Guigo R."/>
            <person name="Zody M.C."/>
            <person name="Mesirov J."/>
            <person name="Lindblad-Toh K."/>
            <person name="Birren B."/>
            <person name="Nusbaum C."/>
            <person name="Kahn D."/>
            <person name="Robinson-Rechavi M."/>
            <person name="Laudet V."/>
            <person name="Schachter V."/>
            <person name="Quetier F."/>
            <person name="Saurin W."/>
            <person name="Scarpelli C."/>
            <person name="Wincker P."/>
            <person name="Lander E.S."/>
            <person name="Weissenbach J."/>
            <person name="Roest Crollius H."/>
        </authorList>
    </citation>
    <scope>NUCLEOTIDE SEQUENCE [LARGE SCALE GENOMIC DNA]</scope>
</reference>
<name>RS3A_TETNG</name>
<keyword id="KW-0963">Cytoplasm</keyword>
<keyword id="KW-0539">Nucleus</keyword>
<keyword id="KW-1185">Reference proteome</keyword>
<keyword id="KW-0687">Ribonucleoprotein</keyword>
<keyword id="KW-0689">Ribosomal protein</keyword>
<gene>
    <name type="primary">rps3a</name>
    <name type="ORF">GSTENG00005093001</name>
</gene>
<evidence type="ECO:0000250" key="1">
    <source>
        <dbReference type="UniProtKB" id="P61247"/>
    </source>
</evidence>
<evidence type="ECO:0000250" key="2">
    <source>
        <dbReference type="UniProtKB" id="P97351"/>
    </source>
</evidence>
<evidence type="ECO:0000255" key="3">
    <source>
        <dbReference type="HAMAP-Rule" id="MF_03122"/>
    </source>
</evidence>
<evidence type="ECO:0000256" key="4">
    <source>
        <dbReference type="SAM" id="MobiDB-lite"/>
    </source>
</evidence>
<evidence type="ECO:0000305" key="5"/>
<sequence length="266" mass="30157">MAVGKNKRLTKGGKKGAKKKIVDPFSKKDWYDVKAPAMFNIRNLGKTLVTRTQGTRIASDGLKGRVYEVSLADLQNDEVAFRKFKLITEDVQGKNCLTNFHGMDLTRDKMCSMVKKWQTMIEAHVDVKTTDGYLLRLFCVGFTKRRNNQIRKTSYAQHQQVRQIRKKMMEIMTREVQTNDLKEVVNKLIPDSIGKDIEKACQSIYPLHDVYVRKVKMLKKPKFELGKLMELHGEGGAGTAAKATGDDTGAKVERADGYEPPIQESV</sequence>
<organism>
    <name type="scientific">Tetraodon nigroviridis</name>
    <name type="common">Spotted green pufferfish</name>
    <name type="synonym">Chelonodon nigroviridis</name>
    <dbReference type="NCBI Taxonomy" id="99883"/>
    <lineage>
        <taxon>Eukaryota</taxon>
        <taxon>Metazoa</taxon>
        <taxon>Chordata</taxon>
        <taxon>Craniata</taxon>
        <taxon>Vertebrata</taxon>
        <taxon>Euteleostomi</taxon>
        <taxon>Actinopterygii</taxon>
        <taxon>Neopterygii</taxon>
        <taxon>Teleostei</taxon>
        <taxon>Neoteleostei</taxon>
        <taxon>Acanthomorphata</taxon>
        <taxon>Eupercaria</taxon>
        <taxon>Tetraodontiformes</taxon>
        <taxon>Tetradontoidea</taxon>
        <taxon>Tetraodontidae</taxon>
        <taxon>Tetraodon</taxon>
    </lineage>
</organism>
<feature type="initiator methionine" description="Removed" evidence="3">
    <location>
        <position position="1"/>
    </location>
</feature>
<feature type="chain" id="PRO_0000230766" description="Small ribosomal subunit protein eS1">
    <location>
        <begin position="2"/>
        <end position="266"/>
    </location>
</feature>
<feature type="region of interest" description="Disordered" evidence="4">
    <location>
        <begin position="236"/>
        <end position="266"/>
    </location>
</feature>
<feature type="compositionally biased region" description="Basic and acidic residues" evidence="4">
    <location>
        <begin position="244"/>
        <end position="257"/>
    </location>
</feature>
<dbReference type="EMBL" id="CAAE01007732">
    <property type="protein sequence ID" value="CAF90706.1"/>
    <property type="molecule type" value="Genomic_DNA"/>
</dbReference>
<dbReference type="SMR" id="Q4T8S6"/>
<dbReference type="FunCoup" id="Q4T8S6">
    <property type="interactions" value="1488"/>
</dbReference>
<dbReference type="STRING" id="99883.ENSTNIP00000005962"/>
<dbReference type="Ensembl" id="ENSTNIT00000006110.1">
    <property type="protein sequence ID" value="ENSTNIP00000005962.1"/>
    <property type="gene ID" value="ENSTNIG00000003375.1"/>
</dbReference>
<dbReference type="KEGG" id="tng:GSTEN00005093G001"/>
<dbReference type="GeneTree" id="ENSGT00390000018433"/>
<dbReference type="HOGENOM" id="CLU_062507_0_1_1"/>
<dbReference type="InParanoid" id="Q4T8S6"/>
<dbReference type="OMA" id="TRFKGHE"/>
<dbReference type="OrthoDB" id="9834376at2759"/>
<dbReference type="TreeFam" id="TF300037"/>
<dbReference type="Proteomes" id="UP000007303">
    <property type="component" value="Unassembled WGS sequence"/>
</dbReference>
<dbReference type="GO" id="GO:0022627">
    <property type="term" value="C:cytosolic small ribosomal subunit"/>
    <property type="evidence" value="ECO:0007669"/>
    <property type="project" value="UniProtKB-UniRule"/>
</dbReference>
<dbReference type="GO" id="GO:0005730">
    <property type="term" value="C:nucleolus"/>
    <property type="evidence" value="ECO:0007669"/>
    <property type="project" value="UniProtKB-SubCell"/>
</dbReference>
<dbReference type="GO" id="GO:0032040">
    <property type="term" value="C:small-subunit processome"/>
    <property type="evidence" value="ECO:0000250"/>
    <property type="project" value="UniProtKB"/>
</dbReference>
<dbReference type="GO" id="GO:0003735">
    <property type="term" value="F:structural constituent of ribosome"/>
    <property type="evidence" value="ECO:0007669"/>
    <property type="project" value="UniProtKB-UniRule"/>
</dbReference>
<dbReference type="GO" id="GO:0043009">
    <property type="term" value="P:chordate embryonic development"/>
    <property type="evidence" value="ECO:0007669"/>
    <property type="project" value="Ensembl"/>
</dbReference>
<dbReference type="GO" id="GO:0042274">
    <property type="term" value="P:ribosomal small subunit biogenesis"/>
    <property type="evidence" value="ECO:0000250"/>
    <property type="project" value="UniProtKB"/>
</dbReference>
<dbReference type="GO" id="GO:0006412">
    <property type="term" value="P:translation"/>
    <property type="evidence" value="ECO:0007669"/>
    <property type="project" value="UniProtKB-UniRule"/>
</dbReference>
<dbReference type="HAMAP" id="MF_03122">
    <property type="entry name" value="Ribosomal_eS1_euk"/>
    <property type="match status" value="1"/>
</dbReference>
<dbReference type="InterPro" id="IPR001593">
    <property type="entry name" value="Ribosomal_eS1"/>
</dbReference>
<dbReference type="InterPro" id="IPR018281">
    <property type="entry name" value="Ribosomal_eS1_CS"/>
</dbReference>
<dbReference type="InterPro" id="IPR027500">
    <property type="entry name" value="Ribosomal_eS1_euk"/>
</dbReference>
<dbReference type="PANTHER" id="PTHR11830">
    <property type="entry name" value="40S RIBOSOMAL PROTEIN S3A"/>
    <property type="match status" value="1"/>
</dbReference>
<dbReference type="Pfam" id="PF01015">
    <property type="entry name" value="Ribosomal_S3Ae"/>
    <property type="match status" value="1"/>
</dbReference>
<dbReference type="SMART" id="SM01397">
    <property type="entry name" value="Ribosomal_S3Ae"/>
    <property type="match status" value="1"/>
</dbReference>
<dbReference type="PROSITE" id="PS01191">
    <property type="entry name" value="RIBOSOMAL_S3AE"/>
    <property type="match status" value="1"/>
</dbReference>
<protein>
    <recommendedName>
        <fullName evidence="3">Small ribosomal subunit protein eS1</fullName>
    </recommendedName>
    <alternativeName>
        <fullName evidence="5">40S ribosomal protein S3a</fullName>
    </alternativeName>
</protein>